<sequence length="1001" mass="116070">MPSTNRAGSLKDPEIAELFFKEDPEKLFTDLREIGHGSFGAVYFARDVRTNEVVAIKKMSYSGKQSTEKWQDIIKEVKFLQRIKHPNSIEYKGCYLREHTAWLVMEYCLGSASDLLEVHKKPLQEVEIAAITHGALQGLAYLHSHTMIHRDIKAGNILLTEPGQVKLADFGSASMASPANSFVGTPYWMAPEVILAMDEGQYDGKVDVWSLGITCIELAERKPPLFNMNAMSALYHIAQNESPTLQSNEWSDYFRNFVDSCLQKIPQDRPTSEELLKHIFVLRERPETVLIDLIQRTKDAVRELDNLQYRKMKKLLFQEAHNGPAVEAQEEEEEQDHGVGRTGTVNSVGSNQSIPSMSISASSQSSSVNSLPDVSDDKSELDMMEGDHTVMSNSSVIHLKPEEENYREEGDPRTRASDPQSPPQVSRHKSHYRNREHFATIRTASLVTRQMQEHEQDSELREQMSGYKRMRRQHQKQLMTLENKLKAEMDEHRLRLDKDLETQRNNFAAEMEKLIKKHQAAMEKEAKVMSNEEKKFQQHIQAQQKKELNSFLESQKREYKLRKEQLKEELNENQSTPKKEKQEWLSKQKENIQHFQAEEEANLLRRQRQYLELECRRFKRRMLLGRHNLEQDLVREELNKRQTQKDLEHAMLLRQHESMQELEFRHLNTIQKMRCELIRLQHQTELTNQLEYNKRRERELRRKHVMEVRQQPKSLKSKELQIKKQFQDTCKIQTRQYKALRNHLLETTPKSEHKAVLKRLKEEQTRKLAILAEQYDHSINEMLSTQALRLDEAQEAECQVLKMQLQQELELLNAYQSKIKMQAEAQHDRELRELEQRVSLRRALLEQKIEEEMLALQNERTERIRSLLERQAREIEAFDSESMRLGFSNMVLSNLSPEAFSHSYPGASGWSHNPTGGPGPHWGHPMGGPPQAWGHPMQGGPQPWGHPSGPMQGVPRGSSMGVRNSPQALRRTASGGRTEQGMSRSTSVTSQISNGSHMSYT</sequence>
<keyword id="KW-0025">Alternative splicing</keyword>
<keyword id="KW-0053">Apoptosis</keyword>
<keyword id="KW-0067">ATP-binding</keyword>
<keyword id="KW-0175">Coiled coil</keyword>
<keyword id="KW-0963">Cytoplasm</keyword>
<keyword id="KW-0225">Disease variant</keyword>
<keyword id="KW-0227">DNA damage</keyword>
<keyword id="KW-0234">DNA repair</keyword>
<keyword id="KW-0991">Intellectual disability</keyword>
<keyword id="KW-0418">Kinase</keyword>
<keyword id="KW-0547">Nucleotide-binding</keyword>
<keyword id="KW-0597">Phosphoprotein</keyword>
<keyword id="KW-1267">Proteomics identification</keyword>
<keyword id="KW-1185">Reference proteome</keyword>
<keyword id="KW-0723">Serine/threonine-protein kinase</keyword>
<keyword id="KW-0808">Transferase</keyword>
<organism>
    <name type="scientific">Homo sapiens</name>
    <name type="common">Human</name>
    <dbReference type="NCBI Taxonomy" id="9606"/>
    <lineage>
        <taxon>Eukaryota</taxon>
        <taxon>Metazoa</taxon>
        <taxon>Chordata</taxon>
        <taxon>Craniata</taxon>
        <taxon>Vertebrata</taxon>
        <taxon>Euteleostomi</taxon>
        <taxon>Mammalia</taxon>
        <taxon>Eutheria</taxon>
        <taxon>Euarchontoglires</taxon>
        <taxon>Primates</taxon>
        <taxon>Haplorrhini</taxon>
        <taxon>Catarrhini</taxon>
        <taxon>Hominidae</taxon>
        <taxon>Homo</taxon>
    </lineage>
</organism>
<gene>
    <name type="primary">TAOK1</name>
    <name type="synonym">KIAA1361</name>
    <name type="synonym">MAP3K16</name>
    <name type="synonym">MARKK</name>
</gene>
<feature type="chain" id="PRO_0000086728" description="Serine/threonine-protein kinase TAO1">
    <location>
        <begin position="1"/>
        <end position="1001"/>
    </location>
</feature>
<feature type="domain" description="Protein kinase" evidence="5">
    <location>
        <begin position="28"/>
        <end position="281"/>
    </location>
</feature>
<feature type="region of interest" description="Disordered" evidence="7">
    <location>
        <begin position="324"/>
        <end position="433"/>
    </location>
</feature>
<feature type="region of interest" description="Disordered" evidence="7">
    <location>
        <begin position="567"/>
        <end position="587"/>
    </location>
</feature>
<feature type="region of interest" description="Disordered" evidence="7">
    <location>
        <begin position="911"/>
        <end position="1001"/>
    </location>
</feature>
<feature type="coiled-coil region" evidence="4">
    <location>
        <begin position="458"/>
        <end position="651"/>
    </location>
</feature>
<feature type="coiled-coil region" evidence="4">
    <location>
        <begin position="754"/>
        <end position="877"/>
    </location>
</feature>
<feature type="compositionally biased region" description="Low complexity" evidence="7">
    <location>
        <begin position="350"/>
        <end position="373"/>
    </location>
</feature>
<feature type="compositionally biased region" description="Basic and acidic residues" evidence="7">
    <location>
        <begin position="375"/>
        <end position="388"/>
    </location>
</feature>
<feature type="compositionally biased region" description="Basic and acidic residues" evidence="7">
    <location>
        <begin position="399"/>
        <end position="416"/>
    </location>
</feature>
<feature type="compositionally biased region" description="Basic and acidic residues" evidence="7">
    <location>
        <begin position="577"/>
        <end position="587"/>
    </location>
</feature>
<feature type="compositionally biased region" description="Polar residues" evidence="7">
    <location>
        <begin position="975"/>
        <end position="1001"/>
    </location>
</feature>
<feature type="active site" description="Proton acceptor" evidence="5 6">
    <location>
        <position position="151"/>
    </location>
</feature>
<feature type="binding site" evidence="5">
    <location>
        <begin position="34"/>
        <end position="42"/>
    </location>
    <ligand>
        <name>ATP</name>
        <dbReference type="ChEBI" id="CHEBI:30616"/>
    </ligand>
</feature>
<feature type="binding site" evidence="21">
    <location>
        <position position="57"/>
    </location>
    <ligand>
        <name>ATP</name>
        <dbReference type="ChEBI" id="CHEBI:30616"/>
    </ligand>
</feature>
<feature type="modified residue" description="Phosphoserine" evidence="27 28 30">
    <location>
        <position position="9"/>
    </location>
</feature>
<feature type="modified residue" description="Phosphoserine" evidence="23 24 25 26 27 28 29 30">
    <location>
        <position position="421"/>
    </location>
</feature>
<feature type="modified residue" description="Phosphoserine" evidence="25 30">
    <location>
        <position position="445"/>
    </location>
</feature>
<feature type="modified residue" description="Phosphothreonine" evidence="27">
    <location>
        <position position="669"/>
    </location>
</feature>
<feature type="modified residue" description="Phosphoserine" evidence="24 30">
    <location>
        <position position="965"/>
    </location>
</feature>
<feature type="splice variant" id="VSP_015964" description="In isoform 2." evidence="19">
    <location>
        <begin position="1"/>
        <end position="174"/>
    </location>
</feature>
<feature type="splice variant" id="VSP_043706" description="In isoform 3." evidence="20">
    <location>
        <begin position="569"/>
        <end position="716"/>
    </location>
</feature>
<feature type="splice variant" id="VSP_015965" description="In isoform 2." evidence="19">
    <original>ELNE</original>
    <variation>VLMS</variation>
    <location>
        <begin position="569"/>
        <end position="572"/>
    </location>
</feature>
<feature type="splice variant" id="VSP_015966" description="In isoform 2." evidence="19">
    <location>
        <begin position="573"/>
        <end position="1001"/>
    </location>
</feature>
<feature type="sequence variant" id="VAR_086415" description="In DDIB." evidence="16">
    <original>E</original>
    <variation>G</variation>
    <location>
        <position position="17"/>
    </location>
</feature>
<feature type="sequence variant" id="VAR_086416" description="In DDIB; dbSNP:rs2030976698." evidence="16">
    <original>S</original>
    <variation>F</variation>
    <location>
        <position position="111"/>
    </location>
</feature>
<feature type="sequence variant" id="VAR_086417" description="In DDIB; dbSNP:rs2030989355." evidence="17">
    <original>R</original>
    <variation>I</variation>
    <location>
        <position position="150"/>
    </location>
</feature>
<feature type="sequence variant" id="VAR_086418" description="In DDIB; affects neuron maturation and migration." evidence="17">
    <original>L</original>
    <variation>R</variation>
    <location>
        <position position="167"/>
    </location>
</feature>
<feature type="sequence variant" id="VAR_086419" description="In DDIB." evidence="17">
    <location>
        <begin position="220"/>
        <end position="1001"/>
    </location>
</feature>
<feature type="sequence variant" id="VAR_086420" description="In DDIB; uncertain significance; dbSNP:rs2153027505." evidence="17">
    <original>M</original>
    <variation>V</variation>
    <location>
        <position position="231"/>
    </location>
</feature>
<feature type="sequence variant" id="VAR_086421" description="In DDIB." evidence="16">
    <original>K</original>
    <variation>E</variation>
    <location>
        <position position="298"/>
    </location>
</feature>
<feature type="sequence variant" id="VAR_086422" description="In DDIB." evidence="16">
    <original>D</original>
    <variation>A</variation>
    <location>
        <position position="305"/>
    </location>
</feature>
<feature type="sequence variant" id="VAR_086423" description="In DDIB; uncertain significance." evidence="17">
    <original>L</original>
    <variation>F</variation>
    <location>
        <position position="315"/>
    </location>
</feature>
<feature type="sequence variant" id="VAR_086424" description="In DDIB." evidence="16">
    <location>
        <begin position="544"/>
        <end position="1001"/>
    </location>
</feature>
<feature type="sequence variant" id="VAR_086425" description="In DDIB; affects neuron maturation and migration; dbSNP:rs2153029597." evidence="17">
    <original>L</original>
    <variation>P</variation>
    <location>
        <position position="548"/>
    </location>
</feature>
<feature type="sequence variant" id="VAR_086426" description="In DDIB." evidence="17">
    <location>
        <begin position="605"/>
        <end position="1001"/>
    </location>
</feature>
<feature type="sequence variant" id="VAR_086427" description="In DDIB." evidence="17">
    <location>
        <begin position="607"/>
        <end position="1001"/>
    </location>
</feature>
<feature type="sequence variant" id="VAR_086428" description="In DDIB." evidence="17">
    <location>
        <begin position="695"/>
        <end position="1001"/>
    </location>
</feature>
<feature type="sequence variant" id="VAR_086429" description="In DDIB." evidence="17">
    <location>
        <begin position="702"/>
        <end position="1001"/>
    </location>
</feature>
<feature type="sequence variant" id="VAR_086430" description="In DDIB." evidence="17">
    <location>
        <begin position="709"/>
        <end position="1001"/>
    </location>
</feature>
<feature type="sequence variant" id="VAR_086431" description="In DDIB." evidence="16">
    <location>
        <begin position="781"/>
        <end position="1001"/>
    </location>
</feature>
<feature type="sequence variant" id="VAR_086432" description="In DDIB." evidence="16">
    <location>
        <begin position="830"/>
        <end position="1001"/>
    </location>
</feature>
<feature type="sequence variant" id="VAR_041204" description="In dbSNP:rs34151057." evidence="12">
    <original>A</original>
    <variation>T</variation>
    <location>
        <position position="855"/>
    </location>
</feature>
<feature type="mutagenesis site" description="Abolishes kinase activity, ability to activate the MAPK8/JNK cascade and cleavage by caspase-3 (CASP3)." evidence="10">
    <original>K</original>
    <variation>A</variation>
    <location>
        <position position="57"/>
    </location>
</feature>
<feature type="mutagenesis site" description="Loss of serine/threonine-protein kinase activity." evidence="13">
    <original>D</original>
    <variation>A</variation>
    <location>
        <position position="169"/>
    </location>
</feature>
<feature type="mutagenesis site" description="Does not abolish cleavage by caspase-3 (CASP3)." evidence="10">
    <original>D</original>
    <variation>N</variation>
    <location>
        <position position="376"/>
    </location>
</feature>
<feature type="mutagenesis site" description="Abolishes phosphorylation by ATM; when associated with A-785 and A-990." evidence="13">
    <original>T</original>
    <variation>A</variation>
    <location>
        <position position="643"/>
    </location>
</feature>
<feature type="mutagenesis site" description="Abolishes phosphorylation by ATM; when associated with A-643 and A-990." evidence="13">
    <original>T</original>
    <variation>A</variation>
    <location>
        <position position="785"/>
    </location>
</feature>
<feature type="mutagenesis site" description="Abolishes phosphorylation by ATM; when associated with A-643 and A-785." evidence="13">
    <original>S</original>
    <variation>A</variation>
    <location>
        <position position="990"/>
    </location>
</feature>
<feature type="sequence conflict" description="In Ref. 5; BAB14901." evidence="21" ref="5">
    <original>S</original>
    <variation>T</variation>
    <location>
        <position position="251"/>
    </location>
</feature>
<feature type="sequence conflict" description="In Ref. 1; AAG38502." evidence="21" ref="1">
    <original>F</original>
    <variation>S</variation>
    <location>
        <position position="257"/>
    </location>
</feature>
<feature type="sequence conflict" description="In Ref. 1; AAG38502." evidence="21" ref="1">
    <original>R</original>
    <variation>C</variation>
    <location>
        <position position="860"/>
    </location>
</feature>
<reference key="1">
    <citation type="journal article" date="2003" name="Oncogene">
        <title>Comparative studies of a new subfamily of human Ste20-like kinases: homodimerization, subcellular localization, and selective activation of MKK3 and p38.</title>
        <authorList>
            <person name="Yustein J.T."/>
            <person name="Xia L."/>
            <person name="Kahlenburg J.M."/>
            <person name="Robinson D."/>
            <person name="Templeton D."/>
            <person name="Kung H.-J."/>
        </authorList>
    </citation>
    <scope>NUCLEOTIDE SEQUENCE [MRNA] (ISOFORM 1)</scope>
    <scope>FUNCTION</scope>
    <scope>TISSUE SPECIFICITY</scope>
    <scope>SUBCELLULAR LOCATION</scope>
</reference>
<reference key="2">
    <citation type="submission" date="2001-07" db="EMBL/GenBank/DDBJ databases">
        <title>Characterization of human TAO1.</title>
        <authorList>
            <person name="Jenkins S.G."/>
            <person name="D'Andrea R.J."/>
            <person name="Gamble J.R."/>
            <person name="Vadas M.A."/>
        </authorList>
    </citation>
    <scope>NUCLEOTIDE SEQUENCE [MRNA] (ISOFORM 1)</scope>
</reference>
<reference key="3">
    <citation type="patent" date="2004-07-15" number="WO2004058805">
        <title>T cell activating gene.</title>
        <authorList>
            <person name="Matsuda A."/>
            <person name="Yoneta S."/>
        </authorList>
    </citation>
    <scope>NUCLEOTIDE SEQUENCE [MRNA] (ISOFORM 1)</scope>
</reference>
<reference key="4">
    <citation type="journal article" date="2000" name="DNA Res.">
        <title>Prediction of the coding sequences of unidentified human genes. XVI. The complete sequences of 150 new cDNA clones from brain which code for large proteins in vitro.</title>
        <authorList>
            <person name="Nagase T."/>
            <person name="Kikuno R."/>
            <person name="Ishikawa K."/>
            <person name="Hirosawa M."/>
            <person name="Ohara O."/>
        </authorList>
    </citation>
    <scope>NUCLEOTIDE SEQUENCE [LARGE SCALE MRNA] (ISOFORM 1)</scope>
    <source>
        <tissue>Brain</tissue>
    </source>
</reference>
<reference key="5">
    <citation type="journal article" date="2004" name="Nat. Genet.">
        <title>Complete sequencing and characterization of 21,243 full-length human cDNAs.</title>
        <authorList>
            <person name="Ota T."/>
            <person name="Suzuki Y."/>
            <person name="Nishikawa T."/>
            <person name="Otsuki T."/>
            <person name="Sugiyama T."/>
            <person name="Irie R."/>
            <person name="Wakamatsu A."/>
            <person name="Hayashi K."/>
            <person name="Sato H."/>
            <person name="Nagai K."/>
            <person name="Kimura K."/>
            <person name="Makita H."/>
            <person name="Sekine M."/>
            <person name="Obayashi M."/>
            <person name="Nishi T."/>
            <person name="Shibahara T."/>
            <person name="Tanaka T."/>
            <person name="Ishii S."/>
            <person name="Yamamoto J."/>
            <person name="Saito K."/>
            <person name="Kawai Y."/>
            <person name="Isono Y."/>
            <person name="Nakamura Y."/>
            <person name="Nagahari K."/>
            <person name="Murakami K."/>
            <person name="Yasuda T."/>
            <person name="Iwayanagi T."/>
            <person name="Wagatsuma M."/>
            <person name="Shiratori A."/>
            <person name="Sudo H."/>
            <person name="Hosoiri T."/>
            <person name="Kaku Y."/>
            <person name="Kodaira H."/>
            <person name="Kondo H."/>
            <person name="Sugawara M."/>
            <person name="Takahashi M."/>
            <person name="Kanda K."/>
            <person name="Yokoi T."/>
            <person name="Furuya T."/>
            <person name="Kikkawa E."/>
            <person name="Omura Y."/>
            <person name="Abe K."/>
            <person name="Kamihara K."/>
            <person name="Katsuta N."/>
            <person name="Sato K."/>
            <person name="Tanikawa M."/>
            <person name="Yamazaki M."/>
            <person name="Ninomiya K."/>
            <person name="Ishibashi T."/>
            <person name="Yamashita H."/>
            <person name="Murakawa K."/>
            <person name="Fujimori K."/>
            <person name="Tanai H."/>
            <person name="Kimata M."/>
            <person name="Watanabe M."/>
            <person name="Hiraoka S."/>
            <person name="Chiba Y."/>
            <person name="Ishida S."/>
            <person name="Ono Y."/>
            <person name="Takiguchi S."/>
            <person name="Watanabe S."/>
            <person name="Yosida M."/>
            <person name="Hotuta T."/>
            <person name="Kusano J."/>
            <person name="Kanehori K."/>
            <person name="Takahashi-Fujii A."/>
            <person name="Hara H."/>
            <person name="Tanase T.-O."/>
            <person name="Nomura Y."/>
            <person name="Togiya S."/>
            <person name="Komai F."/>
            <person name="Hara R."/>
            <person name="Takeuchi K."/>
            <person name="Arita M."/>
            <person name="Imose N."/>
            <person name="Musashino K."/>
            <person name="Yuuki H."/>
            <person name="Oshima A."/>
            <person name="Sasaki N."/>
            <person name="Aotsuka S."/>
            <person name="Yoshikawa Y."/>
            <person name="Matsunawa H."/>
            <person name="Ichihara T."/>
            <person name="Shiohata N."/>
            <person name="Sano S."/>
            <person name="Moriya S."/>
            <person name="Momiyama H."/>
            <person name="Satoh N."/>
            <person name="Takami S."/>
            <person name="Terashima Y."/>
            <person name="Suzuki O."/>
            <person name="Nakagawa S."/>
            <person name="Senoh A."/>
            <person name="Mizoguchi H."/>
            <person name="Goto Y."/>
            <person name="Shimizu F."/>
            <person name="Wakebe H."/>
            <person name="Hishigaki H."/>
            <person name="Watanabe T."/>
            <person name="Sugiyama A."/>
            <person name="Takemoto M."/>
            <person name="Kawakami B."/>
            <person name="Yamazaki M."/>
            <person name="Watanabe K."/>
            <person name="Kumagai A."/>
            <person name="Itakura S."/>
            <person name="Fukuzumi Y."/>
            <person name="Fujimori Y."/>
            <person name="Komiyama M."/>
            <person name="Tashiro H."/>
            <person name="Tanigami A."/>
            <person name="Fujiwara T."/>
            <person name="Ono T."/>
            <person name="Yamada K."/>
            <person name="Fujii Y."/>
            <person name="Ozaki K."/>
            <person name="Hirao M."/>
            <person name="Ohmori Y."/>
            <person name="Kawabata A."/>
            <person name="Hikiji T."/>
            <person name="Kobatake N."/>
            <person name="Inagaki H."/>
            <person name="Ikema Y."/>
            <person name="Okamoto S."/>
            <person name="Okitani R."/>
            <person name="Kawakami T."/>
            <person name="Noguchi S."/>
            <person name="Itoh T."/>
            <person name="Shigeta K."/>
            <person name="Senba T."/>
            <person name="Matsumura K."/>
            <person name="Nakajima Y."/>
            <person name="Mizuno T."/>
            <person name="Morinaga M."/>
            <person name="Sasaki M."/>
            <person name="Togashi T."/>
            <person name="Oyama M."/>
            <person name="Hata H."/>
            <person name="Watanabe M."/>
            <person name="Komatsu T."/>
            <person name="Mizushima-Sugano J."/>
            <person name="Satoh T."/>
            <person name="Shirai Y."/>
            <person name="Takahashi Y."/>
            <person name="Nakagawa K."/>
            <person name="Okumura K."/>
            <person name="Nagase T."/>
            <person name="Nomura N."/>
            <person name="Kikuchi H."/>
            <person name="Masuho Y."/>
            <person name="Yamashita R."/>
            <person name="Nakai K."/>
            <person name="Yada T."/>
            <person name="Nakamura Y."/>
            <person name="Ohara O."/>
            <person name="Isogai T."/>
            <person name="Sugano S."/>
        </authorList>
    </citation>
    <scope>NUCLEOTIDE SEQUENCE [LARGE SCALE MRNA] (ISOFORM 2)</scope>
    <source>
        <tissue>Placenta</tissue>
    </source>
</reference>
<reference key="6">
    <citation type="journal article" date="2006" name="Nature">
        <title>DNA sequence of human chromosome 17 and analysis of rearrangement in the human lineage.</title>
        <authorList>
            <person name="Zody M.C."/>
            <person name="Garber M."/>
            <person name="Adams D.J."/>
            <person name="Sharpe T."/>
            <person name="Harrow J."/>
            <person name="Lupski J.R."/>
            <person name="Nicholson C."/>
            <person name="Searle S.M."/>
            <person name="Wilming L."/>
            <person name="Young S.K."/>
            <person name="Abouelleil A."/>
            <person name="Allen N.R."/>
            <person name="Bi W."/>
            <person name="Bloom T."/>
            <person name="Borowsky M.L."/>
            <person name="Bugalter B.E."/>
            <person name="Butler J."/>
            <person name="Chang J.L."/>
            <person name="Chen C.-K."/>
            <person name="Cook A."/>
            <person name="Corum B."/>
            <person name="Cuomo C.A."/>
            <person name="de Jong P.J."/>
            <person name="DeCaprio D."/>
            <person name="Dewar K."/>
            <person name="FitzGerald M."/>
            <person name="Gilbert J."/>
            <person name="Gibson R."/>
            <person name="Gnerre S."/>
            <person name="Goldstein S."/>
            <person name="Grafham D.V."/>
            <person name="Grocock R."/>
            <person name="Hafez N."/>
            <person name="Hagopian D.S."/>
            <person name="Hart E."/>
            <person name="Norman C.H."/>
            <person name="Humphray S."/>
            <person name="Jaffe D.B."/>
            <person name="Jones M."/>
            <person name="Kamal M."/>
            <person name="Khodiyar V.K."/>
            <person name="LaButti K."/>
            <person name="Laird G."/>
            <person name="Lehoczky J."/>
            <person name="Liu X."/>
            <person name="Lokyitsang T."/>
            <person name="Loveland J."/>
            <person name="Lui A."/>
            <person name="Macdonald P."/>
            <person name="Major J.E."/>
            <person name="Matthews L."/>
            <person name="Mauceli E."/>
            <person name="McCarroll S.A."/>
            <person name="Mihalev A.H."/>
            <person name="Mudge J."/>
            <person name="Nguyen C."/>
            <person name="Nicol R."/>
            <person name="O'Leary S.B."/>
            <person name="Osoegawa K."/>
            <person name="Schwartz D.C."/>
            <person name="Shaw-Smith C."/>
            <person name="Stankiewicz P."/>
            <person name="Steward C."/>
            <person name="Swarbreck D."/>
            <person name="Venkataraman V."/>
            <person name="Whittaker C.A."/>
            <person name="Yang X."/>
            <person name="Zimmer A.R."/>
            <person name="Bradley A."/>
            <person name="Hubbard T."/>
            <person name="Birren B.W."/>
            <person name="Rogers J."/>
            <person name="Lander E.S."/>
            <person name="Nusbaum C."/>
        </authorList>
    </citation>
    <scope>NUCLEOTIDE SEQUENCE [LARGE SCALE GENOMIC DNA]</scope>
</reference>
<reference key="7">
    <citation type="submission" date="2005-07" db="EMBL/GenBank/DDBJ databases">
        <authorList>
            <person name="Mural R.J."/>
            <person name="Istrail S."/>
            <person name="Sutton G.G."/>
            <person name="Florea L."/>
            <person name="Halpern A.L."/>
            <person name="Mobarry C.M."/>
            <person name="Lippert R."/>
            <person name="Walenz B."/>
            <person name="Shatkay H."/>
            <person name="Dew I."/>
            <person name="Miller J.R."/>
            <person name="Flanigan M.J."/>
            <person name="Edwards N.J."/>
            <person name="Bolanos R."/>
            <person name="Fasulo D."/>
            <person name="Halldorsson B.V."/>
            <person name="Hannenhalli S."/>
            <person name="Turner R."/>
            <person name="Yooseph S."/>
            <person name="Lu F."/>
            <person name="Nusskern D.R."/>
            <person name="Shue B.C."/>
            <person name="Zheng X.H."/>
            <person name="Zhong F."/>
            <person name="Delcher A.L."/>
            <person name="Huson D.H."/>
            <person name="Kravitz S.A."/>
            <person name="Mouchard L."/>
            <person name="Reinert K."/>
            <person name="Remington K.A."/>
            <person name="Clark A.G."/>
            <person name="Waterman M.S."/>
            <person name="Eichler E.E."/>
            <person name="Adams M.D."/>
            <person name="Hunkapiller M.W."/>
            <person name="Myers E.W."/>
            <person name="Venter J.C."/>
        </authorList>
    </citation>
    <scope>NUCLEOTIDE SEQUENCE [LARGE SCALE GENOMIC DNA]</scope>
</reference>
<reference key="8">
    <citation type="journal article" date="2004" name="Genome Res.">
        <title>The status, quality, and expansion of the NIH full-length cDNA project: the Mammalian Gene Collection (MGC).</title>
        <authorList>
            <consortium name="The MGC Project Team"/>
        </authorList>
    </citation>
    <scope>NUCLEOTIDE SEQUENCE [LARGE SCALE MRNA] (ISOFORMS 1 AND 3)</scope>
    <source>
        <tissue>Brain</tissue>
    </source>
</reference>
<reference key="9">
    <citation type="journal article" date="1998" name="J. Biol. Chem.">
        <title>Isolation of TAO1, a protein kinase that activates MEKs in stress-activated protein kinase cascades.</title>
        <authorList>
            <person name="Hutchison M."/>
            <person name="Berman K.S."/>
            <person name="Cobb M.H."/>
        </authorList>
    </citation>
    <scope>TISSUE SPECIFICITY</scope>
</reference>
<reference key="10">
    <citation type="journal article" date="2003" name="J. Biol. Chem.">
        <title>TAO (thousand-and-one amino acid) protein kinases mediate signaling from carbachol to p38 mitogen-activated protein kinase and ternary complex factors.</title>
        <authorList>
            <person name="Chen Z."/>
            <person name="Raman M."/>
            <person name="Chen L."/>
            <person name="Lee S.F."/>
            <person name="Gilman A.G."/>
            <person name="Cobb M.H."/>
        </authorList>
    </citation>
    <scope>FUNCTION</scope>
</reference>
<reference key="11">
    <citation type="journal article" date="2006" name="J. Biol. Chem.">
        <title>Prostate-derived sterile 20-like kinase 2 (PSK2) regulates apoptotic morphology via C-Jun N-terminal kinase and Rho kinase-1.</title>
        <authorList>
            <person name="Zihni C."/>
            <person name="Mitsopoulos C."/>
            <person name="Tavares I.A."/>
            <person name="Ridley A.J."/>
            <person name="Morris J.D."/>
        </authorList>
    </citation>
    <scope>FUNCTION</scope>
    <scope>PROTEOLYTIC PROCESSING</scope>
    <scope>MUTAGENESIS OF LYS-57 AND ASP-376</scope>
</reference>
<reference key="12">
    <citation type="journal article" date="2006" name="J. Biol. Chem.">
        <title>Osmotic stress activates the TAK1-JNK pathway while blocking TAK1-mediated NF-kappaB activation: TAO2 regulates TAK1 pathways.</title>
        <authorList>
            <person name="Huangfu W.C."/>
            <person name="Omori E."/>
            <person name="Akira S."/>
            <person name="Matsumoto K."/>
            <person name="Ninomiya-Tsuji J."/>
        </authorList>
    </citation>
    <scope>INTERACTION WITH MAP3K7</scope>
</reference>
<reference key="13">
    <citation type="journal article" date="2006" name="Nat. Biotechnol.">
        <title>A probability-based approach for high-throughput protein phosphorylation analysis and site localization.</title>
        <authorList>
            <person name="Beausoleil S.A."/>
            <person name="Villen J."/>
            <person name="Gerber S.A."/>
            <person name="Rush J."/>
            <person name="Gygi S.P."/>
        </authorList>
    </citation>
    <scope>PHOSPHORYLATION [LARGE SCALE ANALYSIS] AT SER-421</scope>
    <scope>IDENTIFICATION BY MASS SPECTROMETRY [LARGE SCALE ANALYSIS]</scope>
    <source>
        <tissue>Cervix carcinoma</tissue>
    </source>
</reference>
<reference key="14">
    <citation type="journal article" date="2007" name="EMBO J.">
        <title>TAO kinases mediate activation of p38 in response to DNA damage.</title>
        <authorList>
            <person name="Raman M."/>
            <person name="Earnest S."/>
            <person name="Zhang K."/>
            <person name="Zhao Y."/>
            <person name="Cobb M.H."/>
        </authorList>
    </citation>
    <scope>FUNCTION</scope>
    <scope>PHOSPHORYLATION BY ATM</scope>
    <scope>INDUCTION</scope>
    <scope>MUTAGENESIS OF ASP-169; THR-643; THR-785 AND SER-990</scope>
</reference>
<reference key="15">
    <citation type="journal article" date="2007" name="Nat. Cell Biol.">
        <title>A functional genomic screen identifies a role for TAO1 kinase in spindle-checkpoint signalling.</title>
        <authorList>
            <person name="Draviam V.M."/>
            <person name="Stegmeier F."/>
            <person name="Nalepa G."/>
            <person name="Sowa M.E."/>
            <person name="Chen J."/>
            <person name="Liang A."/>
            <person name="Hannon G.J."/>
            <person name="Sorger P.K."/>
            <person name="Harper J.W."/>
            <person name="Elledge S.J."/>
        </authorList>
    </citation>
    <scope>POSSIBLE ROLE IN SPINDLE CHECKPOINT</scope>
</reference>
<reference key="16">
    <citation type="journal article" date="2008" name="Cell Biol. Int.">
        <title>Human TAO kinase 1 induces apoptosis in SH-SY5Y cells.</title>
        <authorList>
            <person name="Wu M.F."/>
            <person name="Wang S.G."/>
        </authorList>
    </citation>
    <scope>FUNCTION</scope>
</reference>
<reference key="17">
    <citation type="journal article" date="2008" name="J. Proteome Res.">
        <title>Phosphoproteome of resting human platelets.</title>
        <authorList>
            <person name="Zahedi R.P."/>
            <person name="Lewandrowski U."/>
            <person name="Wiesner J."/>
            <person name="Wortelkamp S."/>
            <person name="Moebius J."/>
            <person name="Schuetz C."/>
            <person name="Walter U."/>
            <person name="Gambaryan S."/>
            <person name="Sickmann A."/>
        </authorList>
    </citation>
    <scope>PHOSPHORYLATION [LARGE SCALE ANALYSIS] AT SER-421 AND SER-965</scope>
    <scope>IDENTIFICATION BY MASS SPECTROMETRY [LARGE SCALE ANALYSIS]</scope>
    <source>
        <tissue>Platelet</tissue>
    </source>
</reference>
<reference key="18">
    <citation type="journal article" date="2008" name="Mol. Cell">
        <title>Kinase-selective enrichment enables quantitative phosphoproteomics of the kinome across the cell cycle.</title>
        <authorList>
            <person name="Daub H."/>
            <person name="Olsen J.V."/>
            <person name="Bairlein M."/>
            <person name="Gnad F."/>
            <person name="Oppermann F.S."/>
            <person name="Korner R."/>
            <person name="Greff Z."/>
            <person name="Keri G."/>
            <person name="Stemmann O."/>
            <person name="Mann M."/>
        </authorList>
    </citation>
    <scope>PHOSPHORYLATION [LARGE SCALE ANALYSIS] AT SER-421</scope>
    <scope>IDENTIFICATION BY MASS SPECTROMETRY [LARGE SCALE ANALYSIS]</scope>
    <source>
        <tissue>Cervix carcinoma</tissue>
    </source>
</reference>
<reference key="19">
    <citation type="journal article" date="2008" name="Proc. Natl. Acad. Sci. U.S.A.">
        <title>A quantitative atlas of mitotic phosphorylation.</title>
        <authorList>
            <person name="Dephoure N."/>
            <person name="Zhou C."/>
            <person name="Villen J."/>
            <person name="Beausoleil S.A."/>
            <person name="Bakalarski C.E."/>
            <person name="Elledge S.J."/>
            <person name="Gygi S.P."/>
        </authorList>
    </citation>
    <scope>PHOSPHORYLATION [LARGE SCALE ANALYSIS] AT SER-421 AND SER-445</scope>
    <scope>IDENTIFICATION BY MASS SPECTROMETRY [LARGE SCALE ANALYSIS]</scope>
    <source>
        <tissue>Cervix carcinoma</tissue>
    </source>
</reference>
<reference key="20">
    <citation type="journal article" date="2009" name="Anal. Chem.">
        <title>Lys-N and trypsin cover complementary parts of the phosphoproteome in a refined SCX-based approach.</title>
        <authorList>
            <person name="Gauci S."/>
            <person name="Helbig A.O."/>
            <person name="Slijper M."/>
            <person name="Krijgsveld J."/>
            <person name="Heck A.J."/>
            <person name="Mohammed S."/>
        </authorList>
    </citation>
    <scope>IDENTIFICATION BY MASS SPECTROMETRY [LARGE SCALE ANALYSIS]</scope>
</reference>
<reference key="21">
    <citation type="journal article" date="2009" name="Mol. Cell. Proteomics">
        <title>Large-scale proteomics analysis of the human kinome.</title>
        <authorList>
            <person name="Oppermann F.S."/>
            <person name="Gnad F."/>
            <person name="Olsen J.V."/>
            <person name="Hornberger R."/>
            <person name="Greff Z."/>
            <person name="Keri G."/>
            <person name="Mann M."/>
            <person name="Daub H."/>
        </authorList>
    </citation>
    <scope>PHOSPHORYLATION [LARGE SCALE ANALYSIS] AT SER-9; SER-421 AND THR-669</scope>
    <scope>IDENTIFICATION BY MASS SPECTROMETRY [LARGE SCALE ANALYSIS]</scope>
</reference>
<reference key="22">
    <citation type="journal article" date="2009" name="Sci. Signal.">
        <title>Quantitative phosphoproteomic analysis of T cell receptor signaling reveals system-wide modulation of protein-protein interactions.</title>
        <authorList>
            <person name="Mayya V."/>
            <person name="Lundgren D.H."/>
            <person name="Hwang S.-I."/>
            <person name="Rezaul K."/>
            <person name="Wu L."/>
            <person name="Eng J.K."/>
            <person name="Rodionov V."/>
            <person name="Han D.K."/>
        </authorList>
    </citation>
    <scope>PHOSPHORYLATION [LARGE SCALE ANALYSIS] AT SER-9 AND SER-421</scope>
    <scope>IDENTIFICATION BY MASS SPECTROMETRY [LARGE SCALE ANALYSIS]</scope>
    <source>
        <tissue>Leukemic T-cell</tissue>
    </source>
</reference>
<reference key="23">
    <citation type="journal article" date="2010" name="Chromosoma">
        <title>Re-examination of siRNA specificity questions role of PICH and Tao1 in the spindle checkpoint and identifies Mad2 as a sensitive target for small RNAs.</title>
        <authorList>
            <person name="Hubner N.C."/>
            <person name="Wang L.H."/>
            <person name="Kaulich M."/>
            <person name="Descombes P."/>
            <person name="Poser I."/>
            <person name="Nigg E.A."/>
        </authorList>
    </citation>
    <scope>LACK OF ROLE IN SPINDLE CHECKPOINT</scope>
</reference>
<reference key="24">
    <citation type="journal article" date="2010" name="Chromosoma">
        <title>Re-evaluating the role of Tao1 in the spindle checkpoint.</title>
        <authorList>
            <person name="Westhorpe F.G."/>
            <person name="Diez M.A."/>
            <person name="Gurden M.D."/>
            <person name="Tighe A."/>
            <person name="Taylor S.S."/>
        </authorList>
    </citation>
    <scope>LACK OF ROLE IN SPINDLE CHECKPOINT</scope>
</reference>
<reference key="25">
    <citation type="journal article" date="2010" name="PLoS ONE">
        <title>Signal transduction protein array analysis links LRRK2 to Ste20 kinases and PKC zeta that modulate neuronal plasticity.</title>
        <authorList>
            <person name="Zach S."/>
            <person name="Felk S."/>
            <person name="Gillardon F."/>
        </authorList>
    </citation>
    <scope>PHOSPHORYLATION BY LRRK2</scope>
</reference>
<reference key="26">
    <citation type="journal article" date="2011" name="BMC Syst. Biol.">
        <title>Initial characterization of the human central proteome.</title>
        <authorList>
            <person name="Burkard T.R."/>
            <person name="Planyavsky M."/>
            <person name="Kaupe I."/>
            <person name="Breitwieser F.P."/>
            <person name="Buerckstuemmer T."/>
            <person name="Bennett K.L."/>
            <person name="Superti-Furga G."/>
            <person name="Colinge J."/>
        </authorList>
    </citation>
    <scope>IDENTIFICATION BY MASS SPECTROMETRY [LARGE SCALE ANALYSIS]</scope>
</reference>
<reference key="27">
    <citation type="journal article" date="2011" name="Sci. Signal.">
        <title>System-wide temporal characterization of the proteome and phosphoproteome of human embryonic stem cell differentiation.</title>
        <authorList>
            <person name="Rigbolt K.T."/>
            <person name="Prokhorova T.A."/>
            <person name="Akimov V."/>
            <person name="Henningsen J."/>
            <person name="Johansen P.T."/>
            <person name="Kratchmarova I."/>
            <person name="Kassem M."/>
            <person name="Mann M."/>
            <person name="Olsen J.V."/>
            <person name="Blagoev B."/>
        </authorList>
    </citation>
    <scope>PHOSPHORYLATION [LARGE SCALE ANALYSIS] AT SER-421</scope>
    <scope>IDENTIFICATION BY MASS SPECTROMETRY [LARGE SCALE ANALYSIS]</scope>
</reference>
<reference key="28">
    <citation type="journal article" date="2013" name="J. Proteome Res.">
        <title>Toward a comprehensive characterization of a human cancer cell phosphoproteome.</title>
        <authorList>
            <person name="Zhou H."/>
            <person name="Di Palma S."/>
            <person name="Preisinger C."/>
            <person name="Peng M."/>
            <person name="Polat A.N."/>
            <person name="Heck A.J."/>
            <person name="Mohammed S."/>
        </authorList>
    </citation>
    <scope>PHOSPHORYLATION [LARGE SCALE ANALYSIS] AT SER-9; SER-421; SER-445 AND SER-965</scope>
    <scope>IDENTIFICATION BY MASS SPECTROMETRY [LARGE SCALE ANALYSIS]</scope>
    <source>
        <tissue>Cervix carcinoma</tissue>
        <tissue>Erythroleukemia</tissue>
    </source>
</reference>
<reference key="29">
    <citation type="journal article" date="2014" name="J. Proteomics">
        <title>An enzyme assisted RP-RPLC approach for in-depth analysis of human liver phosphoproteome.</title>
        <authorList>
            <person name="Bian Y."/>
            <person name="Song C."/>
            <person name="Cheng K."/>
            <person name="Dong M."/>
            <person name="Wang F."/>
            <person name="Huang J."/>
            <person name="Sun D."/>
            <person name="Wang L."/>
            <person name="Ye M."/>
            <person name="Zou H."/>
        </authorList>
    </citation>
    <scope>IDENTIFICATION BY MASS SPECTROMETRY [LARGE SCALE ANALYSIS]</scope>
    <source>
        <tissue>Liver</tissue>
    </source>
</reference>
<reference key="30">
    <citation type="journal article" date="2007" name="Nature">
        <title>Patterns of somatic mutation in human cancer genomes.</title>
        <authorList>
            <person name="Greenman C."/>
            <person name="Stephens P."/>
            <person name="Smith R."/>
            <person name="Dalgliesh G.L."/>
            <person name="Hunter C."/>
            <person name="Bignell G."/>
            <person name="Davies H."/>
            <person name="Teague J."/>
            <person name="Butler A."/>
            <person name="Stevens C."/>
            <person name="Edkins S."/>
            <person name="O'Meara S."/>
            <person name="Vastrik I."/>
            <person name="Schmidt E.E."/>
            <person name="Avis T."/>
            <person name="Barthorpe S."/>
            <person name="Bhamra G."/>
            <person name="Buck G."/>
            <person name="Choudhury B."/>
            <person name="Clements J."/>
            <person name="Cole J."/>
            <person name="Dicks E."/>
            <person name="Forbes S."/>
            <person name="Gray K."/>
            <person name="Halliday K."/>
            <person name="Harrison R."/>
            <person name="Hills K."/>
            <person name="Hinton J."/>
            <person name="Jenkinson A."/>
            <person name="Jones D."/>
            <person name="Menzies A."/>
            <person name="Mironenko T."/>
            <person name="Perry J."/>
            <person name="Raine K."/>
            <person name="Richardson D."/>
            <person name="Shepherd R."/>
            <person name="Small A."/>
            <person name="Tofts C."/>
            <person name="Varian J."/>
            <person name="Webb T."/>
            <person name="West S."/>
            <person name="Widaa S."/>
            <person name="Yates A."/>
            <person name="Cahill D.P."/>
            <person name="Louis D.N."/>
            <person name="Goldstraw P."/>
            <person name="Nicholson A.G."/>
            <person name="Brasseur F."/>
            <person name="Looijenga L."/>
            <person name="Weber B.L."/>
            <person name="Chiew Y.-E."/>
            <person name="DeFazio A."/>
            <person name="Greaves M.F."/>
            <person name="Green A.R."/>
            <person name="Campbell P."/>
            <person name="Birney E."/>
            <person name="Easton D.F."/>
            <person name="Chenevix-Trench G."/>
            <person name="Tan M.-H."/>
            <person name="Khoo S.K."/>
            <person name="Teh B.T."/>
            <person name="Yuen S.T."/>
            <person name="Leung S.Y."/>
            <person name="Wooster R."/>
            <person name="Futreal P.A."/>
            <person name="Stratton M.R."/>
        </authorList>
    </citation>
    <scope>VARIANT [LARGE SCALE ANALYSIS] THR-855</scope>
</reference>
<reference key="31">
    <citation type="journal article" date="2019" name="Am. J. Hum. Genet.">
        <title>De Novo Variants in TAOK1 Cause Neurodevelopmental Disorders.</title>
        <authorList>
            <person name="Dulovic-Mahlow M."/>
            <person name="Trinh J."/>
            <person name="Kandaswamy K.K."/>
            <person name="Braathen G.J."/>
            <person name="Di Donato N."/>
            <person name="Rahikkala E."/>
            <person name="Beblo S."/>
            <person name="Werber M."/>
            <person name="Krajka V."/>
            <person name="Busk O.L."/>
            <person name="Baumann H."/>
            <person name="Al-Sannaa N.A."/>
            <person name="Hinrichs F."/>
            <person name="Affan R."/>
            <person name="Navot N."/>
            <person name="Al Balwi M.A."/>
            <person name="Oprea G."/>
            <person name="Holla O.L."/>
            <person name="Weiss M.E.R."/>
            <person name="Jamra R.A."/>
            <person name="Kahlert A.K."/>
            <person name="Kishore S."/>
            <person name="Tveten K."/>
            <person name="Vos M."/>
            <person name="Rolfs A."/>
            <person name="Lohmann K."/>
        </authorList>
    </citation>
    <scope>VARIANTS DDIB GLY-17; PHE-111; GLU-298; ALA-305; 544-GLN--THR-1001 DEL; 781-GLU--THR-1001 DEL AND 830-GLU--THR-1001 DEL</scope>
    <scope>INVOLVEMENT IN DDIB</scope>
</reference>
<reference key="32">
    <citation type="journal article" date="2021" name="Hum. Mutat.">
        <title>TAOK1 is associated with neurodevelopmental disorder and essential for neuronal maturation and cortical development.</title>
        <authorList>
            <person name="van Woerden G.M."/>
            <person name="Bos M."/>
            <person name="de Konink C."/>
            <person name="Distel B."/>
            <person name="Avagliano Trezza R."/>
            <person name="Shur N.E."/>
            <person name="Baranano K."/>
            <person name="Mahida S."/>
            <person name="Chassevent A."/>
            <person name="Schreiber A."/>
            <person name="Erwin A.L."/>
            <person name="Gripp K.W."/>
            <person name="Rehman F."/>
            <person name="Brulleman S."/>
            <person name="McCormack R."/>
            <person name="de Geus G."/>
            <person name="Kalsner L."/>
            <person name="Sorlin A."/>
            <person name="Bruel A.L."/>
            <person name="Koolen D.A."/>
            <person name="Gabriel M.K."/>
            <person name="Rossi M."/>
            <person name="Fitzpatrick D.R."/>
            <person name="Wilkie A.O.M."/>
            <person name="Calpena E."/>
            <person name="Johnson D."/>
            <person name="Brooks A."/>
            <person name="van Slegtenhorst M."/>
            <person name="Fleischer J."/>
            <person name="Groepper D."/>
            <person name="Lindstrom K."/>
            <person name="Innes A.M."/>
            <person name="Goodwin A."/>
            <person name="Humberson J."/>
            <person name="Noyes A."/>
            <person name="Langley K.G."/>
            <person name="Telegrafi A."/>
            <person name="Blevins A."/>
            <person name="Hoffman J."/>
            <person name="Guillen Sacoto M.J."/>
            <person name="Juusola J."/>
            <person name="Monaghan K.G."/>
            <person name="Punj S."/>
            <person name="Simon M."/>
            <person name="Pfundt R."/>
            <person name="Elgersma Y."/>
            <person name="Kleefstra T."/>
        </authorList>
    </citation>
    <scope>VARIANTS DDIB ILE-150; ARG-167; 220-GLU--THR-1001 DEL; VAL-231; PHE-315; PRO-548; 605-ARG--THR-1001 DEL; 607-GLN--THR-1001 DEL; 695-ARG--THR-1001 DEL; 702-ARG--THR-1001 DEL AND 709-ARG--THR-1001 DEL</scope>
    <scope>FUNCTION</scope>
    <scope>CHARACTERIZATION OF VARIANTS DDIB ARG-167 AND PRO-548</scope>
</reference>
<name>TAOK1_HUMAN</name>
<accession>Q7L7X3</accession>
<accession>A2RUT8</accession>
<accession>B7ZLV6</accession>
<accession>Q96L75</accession>
<accession>Q9H2K7</accession>
<accession>Q9H7S5</accession>
<accession>Q9P2I6</accession>
<dbReference type="EC" id="2.7.11.1"/>
<dbReference type="EMBL" id="AF263312">
    <property type="protein sequence ID" value="AAG38502.1"/>
    <property type="molecule type" value="mRNA"/>
</dbReference>
<dbReference type="EMBL" id="AY049015">
    <property type="protein sequence ID" value="AAL12217.1"/>
    <property type="molecule type" value="mRNA"/>
</dbReference>
<dbReference type="EMBL" id="CQ834802">
    <property type="protein sequence ID" value="CAH05616.1"/>
    <property type="molecule type" value="mRNA"/>
</dbReference>
<dbReference type="EMBL" id="AB037782">
    <property type="protein sequence ID" value="BAA92599.1"/>
    <property type="status" value="ALT_INIT"/>
    <property type="molecule type" value="mRNA"/>
</dbReference>
<dbReference type="EMBL" id="AK024376">
    <property type="protein sequence ID" value="BAB14901.1"/>
    <property type="molecule type" value="mRNA"/>
</dbReference>
<dbReference type="EMBL" id="AC068025">
    <property type="status" value="NOT_ANNOTATED_CDS"/>
    <property type="molecule type" value="Genomic_DNA"/>
</dbReference>
<dbReference type="EMBL" id="AC068588">
    <property type="status" value="NOT_ANNOTATED_CDS"/>
    <property type="molecule type" value="Genomic_DNA"/>
</dbReference>
<dbReference type="EMBL" id="AC090698">
    <property type="status" value="NOT_ANNOTATED_CDS"/>
    <property type="molecule type" value="Genomic_DNA"/>
</dbReference>
<dbReference type="EMBL" id="CH471159">
    <property type="protein sequence ID" value="EAW51188.1"/>
    <property type="molecule type" value="Genomic_DNA"/>
</dbReference>
<dbReference type="EMBL" id="BC133039">
    <property type="protein sequence ID" value="AAI33040.1"/>
    <property type="molecule type" value="mRNA"/>
</dbReference>
<dbReference type="EMBL" id="BC144067">
    <property type="protein sequence ID" value="AAI44068.1"/>
    <property type="molecule type" value="mRNA"/>
</dbReference>
<dbReference type="CCDS" id="CCDS32601.1">
    <molecule id="Q7L7X3-1"/>
</dbReference>
<dbReference type="CCDS" id="CCDS56024.1">
    <molecule id="Q7L7X3-3"/>
</dbReference>
<dbReference type="RefSeq" id="NP_065842.1">
    <molecule id="Q7L7X3-1"/>
    <property type="nucleotide sequence ID" value="NM_020791.4"/>
</dbReference>
<dbReference type="RefSeq" id="NP_079418.1">
    <molecule id="Q7L7X3-3"/>
    <property type="nucleotide sequence ID" value="NM_025142.1"/>
</dbReference>
<dbReference type="RefSeq" id="XP_011523362.1">
    <property type="nucleotide sequence ID" value="XM_011525060.2"/>
</dbReference>
<dbReference type="SMR" id="Q7L7X3"/>
<dbReference type="BioGRID" id="121607">
    <property type="interactions" value="52"/>
</dbReference>
<dbReference type="DIP" id="DIP-39709N"/>
<dbReference type="FunCoup" id="Q7L7X3">
    <property type="interactions" value="3266"/>
</dbReference>
<dbReference type="IntAct" id="Q7L7X3">
    <property type="interactions" value="42"/>
</dbReference>
<dbReference type="MINT" id="Q7L7X3"/>
<dbReference type="STRING" id="9606.ENSP00000261716"/>
<dbReference type="BindingDB" id="Q7L7X3"/>
<dbReference type="ChEMBL" id="CHEMBL5261"/>
<dbReference type="DrugBank" id="DB12010">
    <property type="generic name" value="Fostamatinib"/>
</dbReference>
<dbReference type="DrugCentral" id="Q7L7X3"/>
<dbReference type="GuidetoPHARMACOLOGY" id="2233"/>
<dbReference type="GlyCosmos" id="Q7L7X3">
    <property type="glycosylation" value="1 site, 1 glycan"/>
</dbReference>
<dbReference type="GlyGen" id="Q7L7X3">
    <property type="glycosylation" value="2 sites, 1 O-linked glycan (2 sites)"/>
</dbReference>
<dbReference type="iPTMnet" id="Q7L7X3"/>
<dbReference type="MetOSite" id="Q7L7X3"/>
<dbReference type="PhosphoSitePlus" id="Q7L7X3"/>
<dbReference type="BioMuta" id="TAOK1"/>
<dbReference type="DMDM" id="74759012"/>
<dbReference type="jPOST" id="Q7L7X3"/>
<dbReference type="MassIVE" id="Q7L7X3"/>
<dbReference type="PaxDb" id="9606-ENSP00000261716"/>
<dbReference type="PeptideAtlas" id="Q7L7X3"/>
<dbReference type="ProteomicsDB" id="68829">
    <molecule id="Q7L7X3-1"/>
</dbReference>
<dbReference type="ProteomicsDB" id="68830">
    <molecule id="Q7L7X3-2"/>
</dbReference>
<dbReference type="ProteomicsDB" id="68831">
    <molecule id="Q7L7X3-3"/>
</dbReference>
<dbReference type="Pumba" id="Q7L7X3"/>
<dbReference type="Antibodypedia" id="2089">
    <property type="antibodies" value="392 antibodies from 33 providers"/>
</dbReference>
<dbReference type="DNASU" id="57551"/>
<dbReference type="Ensembl" id="ENST00000261716.8">
    <molecule id="Q7L7X3-1"/>
    <property type="protein sequence ID" value="ENSP00000261716.3"/>
    <property type="gene ID" value="ENSG00000160551.12"/>
</dbReference>
<dbReference type="Ensembl" id="ENST00000536202.1">
    <molecule id="Q7L7X3-3"/>
    <property type="protein sequence ID" value="ENSP00000438819.1"/>
    <property type="gene ID" value="ENSG00000160551.12"/>
</dbReference>
<dbReference type="GeneID" id="57551"/>
<dbReference type="KEGG" id="hsa:57551"/>
<dbReference type="MANE-Select" id="ENST00000261716.8">
    <property type="protein sequence ID" value="ENSP00000261716.3"/>
    <property type="RefSeq nucleotide sequence ID" value="NM_020791.4"/>
    <property type="RefSeq protein sequence ID" value="NP_065842.1"/>
</dbReference>
<dbReference type="UCSC" id="uc002hdz.3">
    <molecule id="Q7L7X3-1"/>
    <property type="organism name" value="human"/>
</dbReference>
<dbReference type="AGR" id="HGNC:29259"/>
<dbReference type="CTD" id="57551"/>
<dbReference type="DisGeNET" id="57551"/>
<dbReference type="GeneCards" id="TAOK1"/>
<dbReference type="HGNC" id="HGNC:29259">
    <property type="gene designation" value="TAOK1"/>
</dbReference>
<dbReference type="HPA" id="ENSG00000160551">
    <property type="expression patterns" value="Low tissue specificity"/>
</dbReference>
<dbReference type="MalaCards" id="TAOK1"/>
<dbReference type="MIM" id="610266">
    <property type="type" value="gene"/>
</dbReference>
<dbReference type="MIM" id="619575">
    <property type="type" value="phenotype"/>
</dbReference>
<dbReference type="neXtProt" id="NX_Q7L7X3"/>
<dbReference type="OpenTargets" id="ENSG00000160551"/>
<dbReference type="Orphanet" id="178469">
    <property type="disease" value="Autosomal dominant non-syndromic intellectual disability"/>
</dbReference>
<dbReference type="PharmGKB" id="PA134872946"/>
<dbReference type="VEuPathDB" id="HostDB:ENSG00000160551"/>
<dbReference type="eggNOG" id="KOG0577">
    <property type="taxonomic scope" value="Eukaryota"/>
</dbReference>
<dbReference type="GeneTree" id="ENSGT00940000155796"/>
<dbReference type="HOGENOM" id="CLU_000288_2_2_1"/>
<dbReference type="InParanoid" id="Q7L7X3"/>
<dbReference type="OMA" id="XAKVMAN"/>
<dbReference type="OrthoDB" id="10016527at2759"/>
<dbReference type="PAN-GO" id="Q7L7X3">
    <property type="GO annotations" value="7 GO annotations based on evolutionary models"/>
</dbReference>
<dbReference type="PhylomeDB" id="Q7L7X3"/>
<dbReference type="TreeFam" id="TF351444"/>
<dbReference type="PathwayCommons" id="Q7L7X3"/>
<dbReference type="Reactome" id="R-HSA-141444">
    <property type="pathway name" value="Amplification of signal from unattached kinetochores via a MAD2 inhibitory signal"/>
</dbReference>
<dbReference type="Reactome" id="R-HSA-2467813">
    <property type="pathway name" value="Separation of Sister Chromatids"/>
</dbReference>
<dbReference type="Reactome" id="R-HSA-2500257">
    <property type="pathway name" value="Resolution of Sister Chromatid Cohesion"/>
</dbReference>
<dbReference type="Reactome" id="R-HSA-5663220">
    <property type="pathway name" value="RHO GTPases Activate Formins"/>
</dbReference>
<dbReference type="Reactome" id="R-HSA-68877">
    <property type="pathway name" value="Mitotic Prometaphase"/>
</dbReference>
<dbReference type="Reactome" id="R-HSA-9648025">
    <property type="pathway name" value="EML4 and NUDC in mitotic spindle formation"/>
</dbReference>
<dbReference type="SignaLink" id="Q7L7X3"/>
<dbReference type="SIGNOR" id="Q7L7X3"/>
<dbReference type="BioGRID-ORCS" id="57551">
    <property type="hits" value="64 hits in 1219 CRISPR screens"/>
</dbReference>
<dbReference type="CD-CODE" id="FB4E32DD">
    <property type="entry name" value="Presynaptic clusters and postsynaptic densities"/>
</dbReference>
<dbReference type="ChiTaRS" id="TAOK1">
    <property type="organism name" value="human"/>
</dbReference>
<dbReference type="GeneWiki" id="TAOK1"/>
<dbReference type="GenomeRNAi" id="57551"/>
<dbReference type="Pharos" id="Q7L7X3">
    <property type="development level" value="Tchem"/>
</dbReference>
<dbReference type="PRO" id="PR:Q7L7X3"/>
<dbReference type="Proteomes" id="UP000005640">
    <property type="component" value="Chromosome 17"/>
</dbReference>
<dbReference type="RNAct" id="Q7L7X3">
    <property type="molecule type" value="protein"/>
</dbReference>
<dbReference type="Bgee" id="ENSG00000160551">
    <property type="expression patterns" value="Expressed in corpus callosum and 198 other cell types or tissues"/>
</dbReference>
<dbReference type="ExpressionAtlas" id="Q7L7X3">
    <property type="expression patterns" value="baseline and differential"/>
</dbReference>
<dbReference type="GO" id="GO:0005737">
    <property type="term" value="C:cytoplasm"/>
    <property type="evidence" value="ECO:0000318"/>
    <property type="project" value="GO_Central"/>
</dbReference>
<dbReference type="GO" id="GO:0005829">
    <property type="term" value="C:cytosol"/>
    <property type="evidence" value="ECO:0000314"/>
    <property type="project" value="HPA"/>
</dbReference>
<dbReference type="GO" id="GO:0070062">
    <property type="term" value="C:extracellular exosome"/>
    <property type="evidence" value="ECO:0007005"/>
    <property type="project" value="UniProtKB"/>
</dbReference>
<dbReference type="GO" id="GO:0015630">
    <property type="term" value="C:microtubule cytoskeleton"/>
    <property type="evidence" value="ECO:0000315"/>
    <property type="project" value="ARUK-UCL"/>
</dbReference>
<dbReference type="GO" id="GO:0016604">
    <property type="term" value="C:nuclear body"/>
    <property type="evidence" value="ECO:0000314"/>
    <property type="project" value="HPA"/>
</dbReference>
<dbReference type="GO" id="GO:0048471">
    <property type="term" value="C:perinuclear region of cytoplasm"/>
    <property type="evidence" value="ECO:0000315"/>
    <property type="project" value="ARUK-UCL"/>
</dbReference>
<dbReference type="GO" id="GO:0005886">
    <property type="term" value="C:plasma membrane"/>
    <property type="evidence" value="ECO:0000314"/>
    <property type="project" value="HPA"/>
</dbReference>
<dbReference type="GO" id="GO:0043014">
    <property type="term" value="F:alpha-tubulin binding"/>
    <property type="evidence" value="ECO:0000314"/>
    <property type="project" value="ARUK-UCL"/>
</dbReference>
<dbReference type="GO" id="GO:0005524">
    <property type="term" value="F:ATP binding"/>
    <property type="evidence" value="ECO:0000303"/>
    <property type="project" value="HGNC-UCL"/>
</dbReference>
<dbReference type="GO" id="GO:0048487">
    <property type="term" value="F:beta-tubulin binding"/>
    <property type="evidence" value="ECO:0000314"/>
    <property type="project" value="ARUK-UCL"/>
</dbReference>
<dbReference type="GO" id="GO:0016301">
    <property type="term" value="F:kinase activity"/>
    <property type="evidence" value="ECO:0000314"/>
    <property type="project" value="ARUK-UCL"/>
</dbReference>
<dbReference type="GO" id="GO:0004672">
    <property type="term" value="F:protein kinase activity"/>
    <property type="evidence" value="ECO:0000250"/>
    <property type="project" value="ARUK-UCL"/>
</dbReference>
<dbReference type="GO" id="GO:0106310">
    <property type="term" value="F:protein serine kinase activity"/>
    <property type="evidence" value="ECO:0007669"/>
    <property type="project" value="RHEA"/>
</dbReference>
<dbReference type="GO" id="GO:0043539">
    <property type="term" value="F:protein serine/threonine kinase activator activity"/>
    <property type="evidence" value="ECO:0000250"/>
    <property type="project" value="ARUK-UCL"/>
</dbReference>
<dbReference type="GO" id="GO:0004674">
    <property type="term" value="F:protein serine/threonine kinase activity"/>
    <property type="evidence" value="ECO:0000250"/>
    <property type="project" value="UniProtKB"/>
</dbReference>
<dbReference type="GO" id="GO:0048156">
    <property type="term" value="F:tau protein binding"/>
    <property type="evidence" value="ECO:0000303"/>
    <property type="project" value="ARUK-UCL"/>
</dbReference>
<dbReference type="GO" id="GO:0050321">
    <property type="term" value="F:tau-protein kinase activity"/>
    <property type="evidence" value="ECO:0000303"/>
    <property type="project" value="ARUK-UCL"/>
</dbReference>
<dbReference type="GO" id="GO:0016740">
    <property type="term" value="F:transferase activity"/>
    <property type="evidence" value="ECO:0000303"/>
    <property type="project" value="HGNC-UCL"/>
</dbReference>
<dbReference type="GO" id="GO:0021954">
    <property type="term" value="P:central nervous system neuron development"/>
    <property type="evidence" value="ECO:0000315"/>
    <property type="project" value="UniProtKB"/>
</dbReference>
<dbReference type="GO" id="GO:0006974">
    <property type="term" value="P:DNA damage response"/>
    <property type="evidence" value="ECO:0000314"/>
    <property type="project" value="UniProtKB"/>
</dbReference>
<dbReference type="GO" id="GO:0006281">
    <property type="term" value="P:DNA repair"/>
    <property type="evidence" value="ECO:0007669"/>
    <property type="project" value="UniProtKB-KW"/>
</dbReference>
<dbReference type="GO" id="GO:0097194">
    <property type="term" value="P:execution phase of apoptosis"/>
    <property type="evidence" value="ECO:0000314"/>
    <property type="project" value="UniProtKB"/>
</dbReference>
<dbReference type="GO" id="GO:0000226">
    <property type="term" value="P:microtubule cytoskeleton organization"/>
    <property type="evidence" value="ECO:0000315"/>
    <property type="project" value="ARUK-UCL"/>
</dbReference>
<dbReference type="GO" id="GO:0007095">
    <property type="term" value="P:mitotic G2 DNA damage checkpoint signaling"/>
    <property type="evidence" value="ECO:0000315"/>
    <property type="project" value="UniProtKB"/>
</dbReference>
<dbReference type="GO" id="GO:0007026">
    <property type="term" value="P:negative regulation of microtubule depolymerization"/>
    <property type="evidence" value="ECO:0000315"/>
    <property type="project" value="ARUK-UCL"/>
</dbReference>
<dbReference type="GO" id="GO:0070050">
    <property type="term" value="P:neuron cellular homeostasis"/>
    <property type="evidence" value="ECO:0000315"/>
    <property type="project" value="ARUK-UCL"/>
</dbReference>
<dbReference type="GO" id="GO:0046330">
    <property type="term" value="P:positive regulation of JNK cascade"/>
    <property type="evidence" value="ECO:0000314"/>
    <property type="project" value="UniProtKB"/>
</dbReference>
<dbReference type="GO" id="GO:0032874">
    <property type="term" value="P:positive regulation of stress-activated MAPK cascade"/>
    <property type="evidence" value="ECO:0000315"/>
    <property type="project" value="UniProtKB"/>
</dbReference>
<dbReference type="GO" id="GO:0032956">
    <property type="term" value="P:regulation of actin cytoskeleton organization"/>
    <property type="evidence" value="ECO:0000250"/>
    <property type="project" value="ARUK-UCL"/>
</dbReference>
<dbReference type="GO" id="GO:0051493">
    <property type="term" value="P:regulation of cytoskeleton organization"/>
    <property type="evidence" value="ECO:0000250"/>
    <property type="project" value="UniProtKB"/>
</dbReference>
<dbReference type="GO" id="GO:0070507">
    <property type="term" value="P:regulation of microtubule cytoskeleton organization"/>
    <property type="evidence" value="ECO:0000250"/>
    <property type="project" value="ARUK-UCL"/>
</dbReference>
<dbReference type="CDD" id="cd06635">
    <property type="entry name" value="STKc_TAO1"/>
    <property type="match status" value="1"/>
</dbReference>
<dbReference type="FunFam" id="1.10.510.10:FF:000030">
    <property type="entry name" value="Serine/threonine-protein kinase TAO2, putative"/>
    <property type="match status" value="1"/>
</dbReference>
<dbReference type="FunFam" id="3.30.200.20:FF:000029">
    <property type="entry name" value="Serine/threonine-protein kinase TAO2, putative"/>
    <property type="match status" value="1"/>
</dbReference>
<dbReference type="Gene3D" id="3.30.200.20">
    <property type="entry name" value="Phosphorylase Kinase, domain 1"/>
    <property type="match status" value="1"/>
</dbReference>
<dbReference type="Gene3D" id="1.10.510.10">
    <property type="entry name" value="Transferase(Phosphotransferase) domain 1"/>
    <property type="match status" value="1"/>
</dbReference>
<dbReference type="InterPro" id="IPR011009">
    <property type="entry name" value="Kinase-like_dom_sf"/>
</dbReference>
<dbReference type="InterPro" id="IPR000719">
    <property type="entry name" value="Prot_kinase_dom"/>
</dbReference>
<dbReference type="InterPro" id="IPR017441">
    <property type="entry name" value="Protein_kinase_ATP_BS"/>
</dbReference>
<dbReference type="InterPro" id="IPR008271">
    <property type="entry name" value="Ser/Thr_kinase_AS"/>
</dbReference>
<dbReference type="InterPro" id="IPR051234">
    <property type="entry name" value="TAO_STE20_kinase"/>
</dbReference>
<dbReference type="PANTHER" id="PTHR47167">
    <property type="entry name" value="SERINE/THREONINE-PROTEIN KINASE TAO1-LIKE PROTEIN"/>
    <property type="match status" value="1"/>
</dbReference>
<dbReference type="PANTHER" id="PTHR47167:SF8">
    <property type="entry name" value="SERINE_THREONINE-PROTEIN KINASE TAO1"/>
    <property type="match status" value="1"/>
</dbReference>
<dbReference type="Pfam" id="PF00069">
    <property type="entry name" value="Pkinase"/>
    <property type="match status" value="1"/>
</dbReference>
<dbReference type="SMART" id="SM00220">
    <property type="entry name" value="S_TKc"/>
    <property type="match status" value="1"/>
</dbReference>
<dbReference type="SUPFAM" id="SSF56112">
    <property type="entry name" value="Protein kinase-like (PK-like)"/>
    <property type="match status" value="1"/>
</dbReference>
<dbReference type="PROSITE" id="PS00107">
    <property type="entry name" value="PROTEIN_KINASE_ATP"/>
    <property type="match status" value="1"/>
</dbReference>
<dbReference type="PROSITE" id="PS50011">
    <property type="entry name" value="PROTEIN_KINASE_DOM"/>
    <property type="match status" value="1"/>
</dbReference>
<dbReference type="PROSITE" id="PS00108">
    <property type="entry name" value="PROTEIN_KINASE_ST"/>
    <property type="match status" value="1"/>
</dbReference>
<evidence type="ECO:0000250" key="1"/>
<evidence type="ECO:0000250" key="2">
    <source>
        <dbReference type="UniProtKB" id="O88664"/>
    </source>
</evidence>
<evidence type="ECO:0000250" key="3">
    <source>
        <dbReference type="UniProtKB" id="Q5F2E8"/>
    </source>
</evidence>
<evidence type="ECO:0000255" key="4"/>
<evidence type="ECO:0000255" key="5">
    <source>
        <dbReference type="PROSITE-ProRule" id="PRU00159"/>
    </source>
</evidence>
<evidence type="ECO:0000255" key="6">
    <source>
        <dbReference type="PROSITE-ProRule" id="PRU10027"/>
    </source>
</evidence>
<evidence type="ECO:0000256" key="7">
    <source>
        <dbReference type="SAM" id="MobiDB-lite"/>
    </source>
</evidence>
<evidence type="ECO:0000269" key="8">
    <source>
    </source>
</evidence>
<evidence type="ECO:0000269" key="9">
    <source>
    </source>
</evidence>
<evidence type="ECO:0000269" key="10">
    <source>
    </source>
</evidence>
<evidence type="ECO:0000269" key="11">
    <source>
    </source>
</evidence>
<evidence type="ECO:0000269" key="12">
    <source>
    </source>
</evidence>
<evidence type="ECO:0000269" key="13">
    <source>
    </source>
</evidence>
<evidence type="ECO:0000269" key="14">
    <source>
    </source>
</evidence>
<evidence type="ECO:0000269" key="15">
    <source>
    </source>
</evidence>
<evidence type="ECO:0000269" key="16">
    <source>
    </source>
</evidence>
<evidence type="ECO:0000269" key="17">
    <source>
    </source>
</evidence>
<evidence type="ECO:0000269" key="18">
    <source>
    </source>
</evidence>
<evidence type="ECO:0000303" key="19">
    <source>
    </source>
</evidence>
<evidence type="ECO:0000303" key="20">
    <source>
    </source>
</evidence>
<evidence type="ECO:0000305" key="21"/>
<evidence type="ECO:0000305" key="22">
    <source>
    </source>
</evidence>
<evidence type="ECO:0007744" key="23">
    <source>
    </source>
</evidence>
<evidence type="ECO:0007744" key="24">
    <source>
    </source>
</evidence>
<evidence type="ECO:0007744" key="25">
    <source>
    </source>
</evidence>
<evidence type="ECO:0007744" key="26">
    <source>
    </source>
</evidence>
<evidence type="ECO:0007744" key="27">
    <source>
    </source>
</evidence>
<evidence type="ECO:0007744" key="28">
    <source>
    </source>
</evidence>
<evidence type="ECO:0007744" key="29">
    <source>
    </source>
</evidence>
<evidence type="ECO:0007744" key="30">
    <source>
    </source>
</evidence>
<protein>
    <recommendedName>
        <fullName>Serine/threonine-protein kinase TAO1</fullName>
        <ecNumber>2.7.11.1</ecNumber>
    </recommendedName>
    <alternativeName>
        <fullName>Kinase from chicken homolog B</fullName>
        <shortName>hKFC-B</shortName>
    </alternativeName>
    <alternativeName>
        <fullName>MARK Kinase</fullName>
        <shortName>MARKK</shortName>
    </alternativeName>
    <alternativeName>
        <fullName>Prostate-derived sterile 20-like kinase 2</fullName>
        <shortName>PSK-2</shortName>
        <shortName>PSK2</shortName>
        <shortName>Prostate-derived STE20-like kinase 2</shortName>
    </alternativeName>
    <alternativeName>
        <fullName>Thousand and one amino acid protein kinase 1</fullName>
        <shortName>TAOK1</shortName>
        <shortName>hTAOK1</shortName>
    </alternativeName>
</protein>
<proteinExistence type="evidence at protein level"/>
<comment type="function">
    <text evidence="3 8 9 10 13 14 17">Serine/threonine-protein kinase involved in various processes such as p38/MAPK14 stress-activated MAPK cascade, DNA damage response and regulation of cytoskeleton stability. Phosphorylates MAP2K3, MAP2K6 and MARK2. Acts as an activator of the p38/MAPK14 stress-activated MAPK cascade by mediating phosphorylation and subsequent activation of the upstream MAP2K3 and MAP2K6 kinases. Involved in G-protein coupled receptor signaling to p38/MAPK14. In response to DNA damage, involved in the G2/M transition DNA damage checkpoint by activating the p38/MAPK14 stress-activated MAPK cascade, probably by mediating phosphorylation of MAP2K3 and MAP2K6. Acts as a regulator of cytoskeleton stability by phosphorylating 'Thr-208' of MARK2, leading to activate MARK2 kinase activity and subsequent phosphorylation and detachment of MAPT/TAU from microtubules. Also acts as a regulator of apoptosis: regulates apoptotic morphological changes, including cell contraction, membrane blebbing and apoptotic bodies formation via activation of the MAPK8/JNK cascade. Plays an essential role in the regulation of neuronal development in the central nervous system (PubMed:33565190). Also plays a role in the regulation of neuronal migration to the cortical plate (By similarity).</text>
</comment>
<comment type="catalytic activity">
    <reaction>
        <text>L-seryl-[protein] + ATP = O-phospho-L-seryl-[protein] + ADP + H(+)</text>
        <dbReference type="Rhea" id="RHEA:17989"/>
        <dbReference type="Rhea" id="RHEA-COMP:9863"/>
        <dbReference type="Rhea" id="RHEA-COMP:11604"/>
        <dbReference type="ChEBI" id="CHEBI:15378"/>
        <dbReference type="ChEBI" id="CHEBI:29999"/>
        <dbReference type="ChEBI" id="CHEBI:30616"/>
        <dbReference type="ChEBI" id="CHEBI:83421"/>
        <dbReference type="ChEBI" id="CHEBI:456216"/>
        <dbReference type="EC" id="2.7.11.1"/>
    </reaction>
</comment>
<comment type="catalytic activity">
    <reaction>
        <text>L-threonyl-[protein] + ATP = O-phospho-L-threonyl-[protein] + ADP + H(+)</text>
        <dbReference type="Rhea" id="RHEA:46608"/>
        <dbReference type="Rhea" id="RHEA-COMP:11060"/>
        <dbReference type="Rhea" id="RHEA-COMP:11605"/>
        <dbReference type="ChEBI" id="CHEBI:15378"/>
        <dbReference type="ChEBI" id="CHEBI:30013"/>
        <dbReference type="ChEBI" id="CHEBI:30616"/>
        <dbReference type="ChEBI" id="CHEBI:61977"/>
        <dbReference type="ChEBI" id="CHEBI:456216"/>
        <dbReference type="EC" id="2.7.11.1"/>
    </reaction>
</comment>
<comment type="activity regulation">
    <text>Serine/threonine-protein kinase activity is inhibited by SPRED1.</text>
</comment>
<comment type="subunit">
    <text evidence="1 2 11">Self-associates. Interacts with MAP2K3 (By similarity). Interacts with SPRED1 (By similarity). Interacts with TESK1; the interaction inhibits TAOK1 kinase activity (By similarity). Interacts with MAP3K7.</text>
</comment>
<comment type="subcellular location">
    <subcellularLocation>
        <location evidence="9">Cytoplasm</location>
    </subcellularLocation>
</comment>
<comment type="alternative products">
    <event type="alternative splicing"/>
    <isoform>
        <id>Q7L7X3-1</id>
        <name>1</name>
        <sequence type="displayed"/>
    </isoform>
    <isoform>
        <id>Q7L7X3-2</id>
        <name>2</name>
        <sequence type="described" ref="VSP_015964 VSP_015965 VSP_015966"/>
    </isoform>
    <isoform>
        <id>Q7L7X3-3</id>
        <name>3</name>
        <sequence type="described" ref="VSP_043706"/>
    </isoform>
</comment>
<comment type="tissue specificity">
    <text evidence="9 18">Highly expressed in the testis, and to a lower extent also expressed in brain, placenta, colon and skeletal muscle.</text>
</comment>
<comment type="induction">
    <text evidence="13">In response to DNA damage.</text>
</comment>
<comment type="PTM">
    <text evidence="10">Proteolytically processed by caspase-3 (CASP3).</text>
</comment>
<comment type="PTM">
    <text evidence="1 13 15">Autophosphorylated (By similarity). Phosphorylated by ATM in response to DNA damage. Phosphorylated by LRRK2.</text>
</comment>
<comment type="disease" evidence="16 17">
    <disease id="DI-06244">
        <name>Developmental delay with or without intellectual impairment or behavioral abnormalities</name>
        <acronym>DDIB</acronym>
        <description>An autosomal dominant disorder characterized by a highly variable phenotype of developmental delay, intellectual disability, learning or behavioral problems, muscular hypotonia, and neonatal feeding difficulties.</description>
        <dbReference type="MIM" id="619575"/>
    </disease>
    <text>The disease is caused by variants affecting the gene represented in this entry.</text>
</comment>
<comment type="similarity">
    <text evidence="21">Belongs to the protein kinase superfamily. STE Ser/Thr protein kinase family. STE20 subfamily.</text>
</comment>
<comment type="caution">
    <text evidence="22">Was initially thought to play a role in the spindle checkpoint (PubMed:17417629). However, it was later shown that it is not the case and that phenotypes initially observed are the cause of the siRNA used that has an off-target effect resulting in MAD2L1 inhibition (PubMed:19904549, PubMed:20162290).</text>
</comment>
<comment type="sequence caution" evidence="21">
    <conflict type="erroneous initiation">
        <sequence resource="EMBL-CDS" id="BAA92599"/>
    </conflict>
    <text>Extended N-terminus.</text>
</comment>